<sequence length="166" mass="18842">MLPLLIICLLPAIEGKNCLRCWPELSALIDYDLQILWVTPGPPTELSQNRDHLEEETAKFFTQVHQAIKTLRDDKTVLLEEIYTHKNLFTERLNKISDGLKEKDIQSTLKVTSCADCRTHFLSCNDPTFCPARNRRTSLWAVSLSSALLLAIAGDVSFTGKGRRRQ</sequence>
<proteinExistence type="inferred from homology"/>
<dbReference type="EMBL" id="AC114783">
    <property type="status" value="NOT_ANNOTATED_CDS"/>
    <property type="molecule type" value="Genomic_DNA"/>
</dbReference>
<dbReference type="EMBL" id="CH471103">
    <property type="protein sequence ID" value="EAW95277.1"/>
    <property type="molecule type" value="Genomic_DNA"/>
</dbReference>
<dbReference type="CCDS" id="CCDS82507.1"/>
<dbReference type="RefSeq" id="NP_001309173.1">
    <property type="nucleotide sequence ID" value="NM_001322244.2"/>
</dbReference>
<dbReference type="RefSeq" id="NP_001403008.1">
    <property type="nucleotide sequence ID" value="NM_001416079.1"/>
</dbReference>
<dbReference type="RefSeq" id="XP_016858639.1">
    <property type="nucleotide sequence ID" value="XM_017003150.1"/>
</dbReference>
<dbReference type="SMR" id="A0A1B0GUA7"/>
<dbReference type="STRING" id="9606.ENSP00000489776"/>
<dbReference type="GlyGen" id="A0A1B0GUA7">
    <property type="glycosylation" value="1 site"/>
</dbReference>
<dbReference type="BioMuta" id="TEX51"/>
<dbReference type="DNASU" id="101929926"/>
<dbReference type="Ensembl" id="ENST00000450035.5">
    <property type="protein sequence ID" value="ENSP00000490030.1"/>
    <property type="gene ID" value="ENSG00000237524.11"/>
</dbReference>
<dbReference type="Ensembl" id="ENST00000568484.6">
    <property type="protein sequence ID" value="ENSP00000489776.1"/>
    <property type="gene ID" value="ENSG00000237524.11"/>
</dbReference>
<dbReference type="GeneID" id="101929926"/>
<dbReference type="KEGG" id="hsa:101929926"/>
<dbReference type="MANE-Select" id="ENST00000568484.6">
    <property type="protein sequence ID" value="ENSP00000489776.1"/>
    <property type="RefSeq nucleotide sequence ID" value="NM_001322244.2"/>
    <property type="RefSeq protein sequence ID" value="NP_001309173.1"/>
</dbReference>
<dbReference type="AGR" id="HGNC:52387"/>
<dbReference type="CTD" id="101929926"/>
<dbReference type="DisGeNET" id="101929926"/>
<dbReference type="GeneCards" id="TEX51"/>
<dbReference type="HGNC" id="HGNC:52387">
    <property type="gene designation" value="TEX51"/>
</dbReference>
<dbReference type="HPA" id="ENSG00000237524">
    <property type="expression patterns" value="Tissue enriched (testis)"/>
</dbReference>
<dbReference type="neXtProt" id="NX_A0A1B0GUA7"/>
<dbReference type="OpenTargets" id="ENSG00000237524"/>
<dbReference type="VEuPathDB" id="HostDB:ENSG00000237524"/>
<dbReference type="GeneTree" id="ENSGT01040000240573"/>
<dbReference type="InParanoid" id="A0A1B0GUA7"/>
<dbReference type="OrthoDB" id="9808520at2759"/>
<dbReference type="PAN-GO" id="A0A1B0GUA7">
    <property type="GO annotations" value="0 GO annotations based on evolutionary models"/>
</dbReference>
<dbReference type="BioGRID-ORCS" id="101929926">
    <property type="hits" value="0 hits in 15 CRISPR screens"/>
</dbReference>
<dbReference type="GenomeRNAi" id="101929926"/>
<dbReference type="Pharos" id="A0A1B0GUA7">
    <property type="development level" value="Tdark"/>
</dbReference>
<dbReference type="PRO" id="PR:A0A1B0GUA7"/>
<dbReference type="Proteomes" id="UP000005640">
    <property type="component" value="Chromosome 2"/>
</dbReference>
<dbReference type="RNAct" id="A0A1B0GUA7">
    <property type="molecule type" value="protein"/>
</dbReference>
<dbReference type="Bgee" id="ENSG00000237524">
    <property type="expression patterns" value="Expressed in right testis and 68 other cell types or tissues"/>
</dbReference>
<dbReference type="ExpressionAtlas" id="A0A1B0GUA7">
    <property type="expression patterns" value="baseline and differential"/>
</dbReference>
<dbReference type="GO" id="GO:0016020">
    <property type="term" value="C:membrane"/>
    <property type="evidence" value="ECO:0007669"/>
    <property type="project" value="UniProtKB-SubCell"/>
</dbReference>
<keyword id="KW-0472">Membrane</keyword>
<keyword id="KW-1185">Reference proteome</keyword>
<keyword id="KW-0732">Signal</keyword>
<keyword id="KW-0812">Transmembrane</keyword>
<keyword id="KW-1133">Transmembrane helix</keyword>
<name>TEX51_HUMAN</name>
<reference key="1">
    <citation type="journal article" date="2005" name="Nature">
        <title>Generation and annotation of the DNA sequences of human chromosomes 2 and 4.</title>
        <authorList>
            <person name="Hillier L.W."/>
            <person name="Graves T.A."/>
            <person name="Fulton R.S."/>
            <person name="Fulton L.A."/>
            <person name="Pepin K.H."/>
            <person name="Minx P."/>
            <person name="Wagner-McPherson C."/>
            <person name="Layman D."/>
            <person name="Wylie K."/>
            <person name="Sekhon M."/>
            <person name="Becker M.C."/>
            <person name="Fewell G.A."/>
            <person name="Delehaunty K.D."/>
            <person name="Miner T.L."/>
            <person name="Nash W.E."/>
            <person name="Kremitzki C."/>
            <person name="Oddy L."/>
            <person name="Du H."/>
            <person name="Sun H."/>
            <person name="Bradshaw-Cordum H."/>
            <person name="Ali J."/>
            <person name="Carter J."/>
            <person name="Cordes M."/>
            <person name="Harris A."/>
            <person name="Isak A."/>
            <person name="van Brunt A."/>
            <person name="Nguyen C."/>
            <person name="Du F."/>
            <person name="Courtney L."/>
            <person name="Kalicki J."/>
            <person name="Ozersky P."/>
            <person name="Abbott S."/>
            <person name="Armstrong J."/>
            <person name="Belter E.A."/>
            <person name="Caruso L."/>
            <person name="Cedroni M."/>
            <person name="Cotton M."/>
            <person name="Davidson T."/>
            <person name="Desai A."/>
            <person name="Elliott G."/>
            <person name="Erb T."/>
            <person name="Fronick C."/>
            <person name="Gaige T."/>
            <person name="Haakenson W."/>
            <person name="Haglund K."/>
            <person name="Holmes A."/>
            <person name="Harkins R."/>
            <person name="Kim K."/>
            <person name="Kruchowski S.S."/>
            <person name="Strong C.M."/>
            <person name="Grewal N."/>
            <person name="Goyea E."/>
            <person name="Hou S."/>
            <person name="Levy A."/>
            <person name="Martinka S."/>
            <person name="Mead K."/>
            <person name="McLellan M.D."/>
            <person name="Meyer R."/>
            <person name="Randall-Maher J."/>
            <person name="Tomlinson C."/>
            <person name="Dauphin-Kohlberg S."/>
            <person name="Kozlowicz-Reilly A."/>
            <person name="Shah N."/>
            <person name="Swearengen-Shahid S."/>
            <person name="Snider J."/>
            <person name="Strong J.T."/>
            <person name="Thompson J."/>
            <person name="Yoakum M."/>
            <person name="Leonard S."/>
            <person name="Pearman C."/>
            <person name="Trani L."/>
            <person name="Radionenko M."/>
            <person name="Waligorski J.E."/>
            <person name="Wang C."/>
            <person name="Rock S.M."/>
            <person name="Tin-Wollam A.-M."/>
            <person name="Maupin R."/>
            <person name="Latreille P."/>
            <person name="Wendl M.C."/>
            <person name="Yang S.-P."/>
            <person name="Pohl C."/>
            <person name="Wallis J.W."/>
            <person name="Spieth J."/>
            <person name="Bieri T.A."/>
            <person name="Berkowicz N."/>
            <person name="Nelson J.O."/>
            <person name="Osborne J."/>
            <person name="Ding L."/>
            <person name="Meyer R."/>
            <person name="Sabo A."/>
            <person name="Shotland Y."/>
            <person name="Sinha P."/>
            <person name="Wohldmann P.E."/>
            <person name="Cook L.L."/>
            <person name="Hickenbotham M.T."/>
            <person name="Eldred J."/>
            <person name="Williams D."/>
            <person name="Jones T.A."/>
            <person name="She X."/>
            <person name="Ciccarelli F.D."/>
            <person name="Izaurralde E."/>
            <person name="Taylor J."/>
            <person name="Schmutz J."/>
            <person name="Myers R.M."/>
            <person name="Cox D.R."/>
            <person name="Huang X."/>
            <person name="McPherson J.D."/>
            <person name="Mardis E.R."/>
            <person name="Clifton S.W."/>
            <person name="Warren W.C."/>
            <person name="Chinwalla A.T."/>
            <person name="Eddy S.R."/>
            <person name="Marra M.A."/>
            <person name="Ovcharenko I."/>
            <person name="Furey T.S."/>
            <person name="Miller W."/>
            <person name="Eichler E.E."/>
            <person name="Bork P."/>
            <person name="Suyama M."/>
            <person name="Torrents D."/>
            <person name="Waterston R.H."/>
            <person name="Wilson R.K."/>
        </authorList>
    </citation>
    <scope>NUCLEOTIDE SEQUENCE [LARGE SCALE GENOMIC DNA]</scope>
</reference>
<reference key="2">
    <citation type="submission" date="2005-07" db="EMBL/GenBank/DDBJ databases">
        <authorList>
            <person name="Mural R.J."/>
            <person name="Istrail S."/>
            <person name="Sutton G.G."/>
            <person name="Florea L."/>
            <person name="Halpern A.L."/>
            <person name="Mobarry C.M."/>
            <person name="Lippert R."/>
            <person name="Walenz B."/>
            <person name="Shatkay H."/>
            <person name="Dew I."/>
            <person name="Miller J.R."/>
            <person name="Flanigan M.J."/>
            <person name="Edwards N.J."/>
            <person name="Bolanos R."/>
            <person name="Fasulo D."/>
            <person name="Halldorsson B.V."/>
            <person name="Hannenhalli S."/>
            <person name="Turner R."/>
            <person name="Yooseph S."/>
            <person name="Lu F."/>
            <person name="Nusskern D.R."/>
            <person name="Shue B.C."/>
            <person name="Zheng X.H."/>
            <person name="Zhong F."/>
            <person name="Delcher A.L."/>
            <person name="Huson D.H."/>
            <person name="Kravitz S.A."/>
            <person name="Mouchard L."/>
            <person name="Reinert K."/>
            <person name="Remington K.A."/>
            <person name="Clark A.G."/>
            <person name="Waterman M.S."/>
            <person name="Eichler E.E."/>
            <person name="Adams M.D."/>
            <person name="Hunkapiller M.W."/>
            <person name="Myers E.W."/>
            <person name="Venter J.C."/>
        </authorList>
    </citation>
    <scope>NUCLEOTIDE SEQUENCE [LARGE SCALE GENOMIC DNA]</scope>
</reference>
<evidence type="ECO:0000255" key="1"/>
<evidence type="ECO:0000305" key="2"/>
<evidence type="ECO:0000312" key="3">
    <source>
        <dbReference type="HGNC" id="HGNC:52387"/>
    </source>
</evidence>
<protein>
    <recommendedName>
        <fullName evidence="2">Testis-expressed protein 51</fullName>
    </recommendedName>
</protein>
<comment type="subcellular location">
    <subcellularLocation>
        <location evidence="1">Membrane</location>
        <topology evidence="1">Single-pass type I membrane protein</topology>
    </subcellularLocation>
</comment>
<feature type="signal peptide" evidence="1">
    <location>
        <begin position="1"/>
        <end position="15"/>
    </location>
</feature>
<feature type="chain" id="PRO_0000441046" description="Testis-expressed protein 51" evidence="1">
    <location>
        <begin position="16"/>
        <end position="166"/>
    </location>
</feature>
<feature type="transmembrane region" description="Helical" evidence="1">
    <location>
        <begin position="138"/>
        <end position="154"/>
    </location>
</feature>
<accession>A0A1B0GUA7</accession>
<organism>
    <name type="scientific">Homo sapiens</name>
    <name type="common">Human</name>
    <dbReference type="NCBI Taxonomy" id="9606"/>
    <lineage>
        <taxon>Eukaryota</taxon>
        <taxon>Metazoa</taxon>
        <taxon>Chordata</taxon>
        <taxon>Craniata</taxon>
        <taxon>Vertebrata</taxon>
        <taxon>Euteleostomi</taxon>
        <taxon>Mammalia</taxon>
        <taxon>Eutheria</taxon>
        <taxon>Euarchontoglires</taxon>
        <taxon>Primates</taxon>
        <taxon>Haplorrhini</taxon>
        <taxon>Catarrhini</taxon>
        <taxon>Hominidae</taxon>
        <taxon>Homo</taxon>
    </lineage>
</organism>
<gene>
    <name evidence="3" type="primary">TEX51</name>
</gene>